<gene>
    <name evidence="1" type="primary">proS</name>
    <name type="ordered locus">SRU_2541</name>
</gene>
<evidence type="ECO:0000255" key="1">
    <source>
        <dbReference type="HAMAP-Rule" id="MF_01571"/>
    </source>
</evidence>
<evidence type="ECO:0000305" key="2"/>
<feature type="chain" id="PRO_0000249149" description="Proline--tRNA ligase">
    <location>
        <begin position="1"/>
        <end position="490"/>
    </location>
</feature>
<sequence>MADAVTPRDEDYSQWYQDVVRNGQLAENSPARGCMIIKPNGMALWENMRDQLDQMFKDTGHQNYYFPLFIPERYMEREAEHVEGFAKECAVVTHSRLTQDEEGDLVPDPESELGENYIVRPTSETIIWDTYSKWIQSYRDLPLLYNQWANVVRWEMRPRLFLRTAEFLWQEGHTAHATETEAVEEAERMLDVYTTFAEEYMAMPVLQGRKTESERFPGAVDTYCIEAMMQDGKALQAGTSHFLGQNFAKAFDCTFTNEDNEEEYVWATSWGVSTRLIGGLIMTHSDDQGLVLPPKLAPHQVVIVPLFFDDDQEGPVMETCERLQERLEDHGIRVKMDQNHTQSPGWRFSEHELRGVPLRLAIGPRDLENDNVEMARRDTQEKEVVPQDGIAERVSDTLDDIQHALHERAQDRQADNTRVVEDYDAFREVIGRGGFAWAHWDGTPETEARIQEETSATIRLIPFDREDHEEGEDMLTGEPSEGRVLFAQAY</sequence>
<dbReference type="EC" id="6.1.1.15" evidence="1"/>
<dbReference type="EMBL" id="CP000159">
    <property type="protein sequence ID" value="ABC44145.1"/>
    <property type="status" value="ALT_INIT"/>
    <property type="molecule type" value="Genomic_DNA"/>
</dbReference>
<dbReference type="RefSeq" id="WP_118827359.1">
    <property type="nucleotide sequence ID" value="NC_007677.1"/>
</dbReference>
<dbReference type="RefSeq" id="YP_446639.1">
    <property type="nucleotide sequence ID" value="NC_007677.1"/>
</dbReference>
<dbReference type="SMR" id="Q2RZJ2"/>
<dbReference type="STRING" id="309807.SRU_2541"/>
<dbReference type="EnsemblBacteria" id="ABC44145">
    <property type="protein sequence ID" value="ABC44145"/>
    <property type="gene ID" value="SRU_2541"/>
</dbReference>
<dbReference type="KEGG" id="sru:SRU_2541"/>
<dbReference type="PATRIC" id="fig|309807.25.peg.2648"/>
<dbReference type="eggNOG" id="COG0442">
    <property type="taxonomic scope" value="Bacteria"/>
</dbReference>
<dbReference type="HOGENOM" id="CLU_001882_4_2_10"/>
<dbReference type="OrthoDB" id="9809052at2"/>
<dbReference type="Proteomes" id="UP000008674">
    <property type="component" value="Chromosome"/>
</dbReference>
<dbReference type="GO" id="GO:0017101">
    <property type="term" value="C:aminoacyl-tRNA synthetase multienzyme complex"/>
    <property type="evidence" value="ECO:0007669"/>
    <property type="project" value="TreeGrafter"/>
</dbReference>
<dbReference type="GO" id="GO:0005737">
    <property type="term" value="C:cytoplasm"/>
    <property type="evidence" value="ECO:0007669"/>
    <property type="project" value="UniProtKB-SubCell"/>
</dbReference>
<dbReference type="GO" id="GO:0005524">
    <property type="term" value="F:ATP binding"/>
    <property type="evidence" value="ECO:0007669"/>
    <property type="project" value="UniProtKB-UniRule"/>
</dbReference>
<dbReference type="GO" id="GO:0004827">
    <property type="term" value="F:proline-tRNA ligase activity"/>
    <property type="evidence" value="ECO:0007669"/>
    <property type="project" value="UniProtKB-UniRule"/>
</dbReference>
<dbReference type="GO" id="GO:0006433">
    <property type="term" value="P:prolyl-tRNA aminoacylation"/>
    <property type="evidence" value="ECO:0007669"/>
    <property type="project" value="UniProtKB-UniRule"/>
</dbReference>
<dbReference type="CDD" id="cd00862">
    <property type="entry name" value="ProRS_anticodon_zinc"/>
    <property type="match status" value="1"/>
</dbReference>
<dbReference type="CDD" id="cd00778">
    <property type="entry name" value="ProRS_core_arch_euk"/>
    <property type="match status" value="1"/>
</dbReference>
<dbReference type="FunFam" id="3.40.50.800:FF:000005">
    <property type="entry name" value="bifunctional glutamate/proline--tRNA ligase"/>
    <property type="match status" value="1"/>
</dbReference>
<dbReference type="FunFam" id="3.30.930.10:FF:000023">
    <property type="entry name" value="Proline--tRNA ligase"/>
    <property type="match status" value="1"/>
</dbReference>
<dbReference type="Gene3D" id="3.40.50.800">
    <property type="entry name" value="Anticodon-binding domain"/>
    <property type="match status" value="1"/>
</dbReference>
<dbReference type="Gene3D" id="3.30.930.10">
    <property type="entry name" value="Bira Bifunctional Protein, Domain 2"/>
    <property type="match status" value="1"/>
</dbReference>
<dbReference type="Gene3D" id="3.30.110.30">
    <property type="entry name" value="C-terminal domain of ProRS"/>
    <property type="match status" value="1"/>
</dbReference>
<dbReference type="HAMAP" id="MF_01571">
    <property type="entry name" value="Pro_tRNA_synth_type3"/>
    <property type="match status" value="1"/>
</dbReference>
<dbReference type="InterPro" id="IPR002314">
    <property type="entry name" value="aa-tRNA-synt_IIb"/>
</dbReference>
<dbReference type="InterPro" id="IPR006195">
    <property type="entry name" value="aa-tRNA-synth_II"/>
</dbReference>
<dbReference type="InterPro" id="IPR045864">
    <property type="entry name" value="aa-tRNA-synth_II/BPL/LPL"/>
</dbReference>
<dbReference type="InterPro" id="IPR004154">
    <property type="entry name" value="Anticodon-bd"/>
</dbReference>
<dbReference type="InterPro" id="IPR036621">
    <property type="entry name" value="Anticodon-bd_dom_sf"/>
</dbReference>
<dbReference type="InterPro" id="IPR004499">
    <property type="entry name" value="Pro-tRNA-ligase_IIa_arc-type"/>
</dbReference>
<dbReference type="InterPro" id="IPR016061">
    <property type="entry name" value="Pro-tRNA_ligase_II_C"/>
</dbReference>
<dbReference type="InterPro" id="IPR017449">
    <property type="entry name" value="Pro-tRNA_synth_II"/>
</dbReference>
<dbReference type="InterPro" id="IPR033721">
    <property type="entry name" value="ProRS_core_arch_euk"/>
</dbReference>
<dbReference type="NCBIfam" id="TIGR00408">
    <property type="entry name" value="proS_fam_I"/>
    <property type="match status" value="1"/>
</dbReference>
<dbReference type="PANTHER" id="PTHR43382:SF2">
    <property type="entry name" value="BIFUNCTIONAL GLUTAMATE_PROLINE--TRNA LIGASE"/>
    <property type="match status" value="1"/>
</dbReference>
<dbReference type="PANTHER" id="PTHR43382">
    <property type="entry name" value="PROLYL-TRNA SYNTHETASE"/>
    <property type="match status" value="1"/>
</dbReference>
<dbReference type="Pfam" id="PF03129">
    <property type="entry name" value="HGTP_anticodon"/>
    <property type="match status" value="1"/>
</dbReference>
<dbReference type="Pfam" id="PF09180">
    <property type="entry name" value="ProRS-C_1"/>
    <property type="match status" value="1"/>
</dbReference>
<dbReference type="Pfam" id="PF00587">
    <property type="entry name" value="tRNA-synt_2b"/>
    <property type="match status" value="1"/>
</dbReference>
<dbReference type="SMART" id="SM00946">
    <property type="entry name" value="ProRS-C_1"/>
    <property type="match status" value="1"/>
</dbReference>
<dbReference type="SUPFAM" id="SSF64586">
    <property type="entry name" value="C-terminal domain of ProRS"/>
    <property type="match status" value="1"/>
</dbReference>
<dbReference type="SUPFAM" id="SSF52954">
    <property type="entry name" value="Class II aaRS ABD-related"/>
    <property type="match status" value="1"/>
</dbReference>
<dbReference type="SUPFAM" id="SSF55681">
    <property type="entry name" value="Class II aaRS and biotin synthetases"/>
    <property type="match status" value="1"/>
</dbReference>
<dbReference type="PROSITE" id="PS50862">
    <property type="entry name" value="AA_TRNA_LIGASE_II"/>
    <property type="match status" value="1"/>
</dbReference>
<proteinExistence type="inferred from homology"/>
<keyword id="KW-0030">Aminoacyl-tRNA synthetase</keyword>
<keyword id="KW-0067">ATP-binding</keyword>
<keyword id="KW-0963">Cytoplasm</keyword>
<keyword id="KW-0436">Ligase</keyword>
<keyword id="KW-0547">Nucleotide-binding</keyword>
<keyword id="KW-0648">Protein biosynthesis</keyword>
<keyword id="KW-1185">Reference proteome</keyword>
<reference key="1">
    <citation type="journal article" date="2005" name="Proc. Natl. Acad. Sci. U.S.A.">
        <title>The genome of Salinibacter ruber: convergence and gene exchange among hyperhalophilic bacteria and archaea.</title>
        <authorList>
            <person name="Mongodin E.F."/>
            <person name="Nelson K.E."/>
            <person name="Daugherty S."/>
            <person name="DeBoy R.T."/>
            <person name="Wister J."/>
            <person name="Khouri H."/>
            <person name="Weidman J."/>
            <person name="Walsh D.A."/>
            <person name="Papke R.T."/>
            <person name="Sanchez Perez G."/>
            <person name="Sharma A.K."/>
            <person name="Nesbo C.L."/>
            <person name="MacLeod D."/>
            <person name="Bapteste E."/>
            <person name="Doolittle W.F."/>
            <person name="Charlebois R.L."/>
            <person name="Legault B."/>
            <person name="Rodriguez-Valera F."/>
        </authorList>
    </citation>
    <scope>NUCLEOTIDE SEQUENCE [LARGE SCALE GENOMIC DNA]</scope>
    <source>
        <strain>DSM 13855 / CECT 5946 / M31</strain>
    </source>
</reference>
<comment type="function">
    <text evidence="1">Catalyzes the attachment of proline to tRNA(Pro) in a two-step reaction: proline is first activated by ATP to form Pro-AMP and then transferred to the acceptor end of tRNA(Pro).</text>
</comment>
<comment type="catalytic activity">
    <reaction evidence="1">
        <text>tRNA(Pro) + L-proline + ATP = L-prolyl-tRNA(Pro) + AMP + diphosphate</text>
        <dbReference type="Rhea" id="RHEA:14305"/>
        <dbReference type="Rhea" id="RHEA-COMP:9700"/>
        <dbReference type="Rhea" id="RHEA-COMP:9702"/>
        <dbReference type="ChEBI" id="CHEBI:30616"/>
        <dbReference type="ChEBI" id="CHEBI:33019"/>
        <dbReference type="ChEBI" id="CHEBI:60039"/>
        <dbReference type="ChEBI" id="CHEBI:78442"/>
        <dbReference type="ChEBI" id="CHEBI:78532"/>
        <dbReference type="ChEBI" id="CHEBI:456215"/>
        <dbReference type="EC" id="6.1.1.15"/>
    </reaction>
</comment>
<comment type="subunit">
    <text evidence="1">Homodimer.</text>
</comment>
<comment type="subcellular location">
    <subcellularLocation>
        <location evidence="1">Cytoplasm</location>
    </subcellularLocation>
</comment>
<comment type="domain">
    <text evidence="1">Consists of three domains: the N-terminal catalytic domain, the anticodon-binding domain and the C-terminal extension.</text>
</comment>
<comment type="similarity">
    <text evidence="1">Belongs to the class-II aminoacyl-tRNA synthetase family. ProS type 3 subfamily.</text>
</comment>
<comment type="sequence caution" evidence="2">
    <conflict type="erroneous initiation">
        <sequence resource="EMBL-CDS" id="ABC44145"/>
    </conflict>
</comment>
<protein>
    <recommendedName>
        <fullName evidence="1">Proline--tRNA ligase</fullName>
        <ecNumber evidence="1">6.1.1.15</ecNumber>
    </recommendedName>
    <alternativeName>
        <fullName evidence="1">Prolyl-tRNA synthetase</fullName>
        <shortName evidence="1">ProRS</shortName>
    </alternativeName>
</protein>
<name>SYP_SALRD</name>
<accession>Q2RZJ2</accession>
<organism>
    <name type="scientific">Salinibacter ruber (strain DSM 13855 / M31)</name>
    <dbReference type="NCBI Taxonomy" id="309807"/>
    <lineage>
        <taxon>Bacteria</taxon>
        <taxon>Pseudomonadati</taxon>
        <taxon>Rhodothermota</taxon>
        <taxon>Rhodothermia</taxon>
        <taxon>Rhodothermales</taxon>
        <taxon>Salinibacteraceae</taxon>
        <taxon>Salinibacter</taxon>
    </lineage>
</organism>